<comment type="function">
    <text evidence="1">Catalyzes the reversible isomerization of glucose-6-phosphate to fructose-6-phosphate.</text>
</comment>
<comment type="catalytic activity">
    <reaction evidence="1">
        <text>alpha-D-glucose 6-phosphate = beta-D-fructose 6-phosphate</text>
        <dbReference type="Rhea" id="RHEA:11816"/>
        <dbReference type="ChEBI" id="CHEBI:57634"/>
        <dbReference type="ChEBI" id="CHEBI:58225"/>
        <dbReference type="EC" id="5.3.1.9"/>
    </reaction>
</comment>
<comment type="pathway">
    <text evidence="1">Carbohydrate biosynthesis; gluconeogenesis.</text>
</comment>
<comment type="pathway">
    <text evidence="1">Carbohydrate degradation; glycolysis; D-glyceraldehyde 3-phosphate and glycerone phosphate from D-glucose: step 2/4.</text>
</comment>
<comment type="subcellular location">
    <subcellularLocation>
        <location evidence="1">Cytoplasm</location>
    </subcellularLocation>
</comment>
<comment type="similarity">
    <text evidence="1">Belongs to the GPI family.</text>
</comment>
<sequence>MNPIDSPAWRALAAHAEAIRPLHLRDLFATDPQRFELFSLHHDGLLLDYSKQRVSVETMALLRAYAETADVTGWRRRMLDGESINHTEGRAVRHMSLRAGDQAPAEVRAALARQQAFCESIHNGVWRGFSGERITDVVNIGIGGSDLGPRMAALALSARQQPDIAVHFIANVDSADIAPLLASLNPRTTLFIVASKTFTTLETLTNARTARDWLLATAGQESAIARHFVAISTNLELTKQFGIADDNVFEFWDWVGGRFSIWSAIGLSLALAIGWKNFEQLQAGARAMDRHFIDTPADENLPLTLALLSLWNTNFLGASTEAMLPYSQSLHLFPAYLQQLEMESNGKQIDRDGKPLNIATSPVIWGESGTNGQHSFYQLFHQGGHLIPADFVALREADFPLPGHHASLLANCLAQSAALAFGQTAEEVRAAGIPEALIPYKVFPGNQPSNTLLLPSLDPYTLGQLLALFEHKVFCLGVLWNLNAFDQWGVELGKQLAGQLTPLIEGNGDLSAFDSSTRGLITALKG</sequence>
<gene>
    <name evidence="1" type="primary">pgi</name>
    <name type="ordered locus">Daro_0581</name>
</gene>
<proteinExistence type="inferred from homology"/>
<feature type="chain" id="PRO_0000180636" description="Glucose-6-phosphate isomerase">
    <location>
        <begin position="1"/>
        <end position="526"/>
    </location>
</feature>
<feature type="active site" description="Proton donor" evidence="1">
    <location>
        <position position="343"/>
    </location>
</feature>
<feature type="active site" evidence="1">
    <location>
        <position position="374"/>
    </location>
</feature>
<feature type="active site" evidence="1">
    <location>
        <position position="494"/>
    </location>
</feature>
<name>G6PI_DECAR</name>
<accession>Q47IJ3</accession>
<dbReference type="EC" id="5.3.1.9" evidence="1"/>
<dbReference type="EMBL" id="CP000089">
    <property type="protein sequence ID" value="AAZ45338.1"/>
    <property type="molecule type" value="Genomic_DNA"/>
</dbReference>
<dbReference type="SMR" id="Q47IJ3"/>
<dbReference type="STRING" id="159087.Daro_0581"/>
<dbReference type="KEGG" id="dar:Daro_0581"/>
<dbReference type="eggNOG" id="COG0166">
    <property type="taxonomic scope" value="Bacteria"/>
</dbReference>
<dbReference type="HOGENOM" id="CLU_017947_3_1_4"/>
<dbReference type="OrthoDB" id="140919at2"/>
<dbReference type="UniPathway" id="UPA00109">
    <property type="reaction ID" value="UER00181"/>
</dbReference>
<dbReference type="UniPathway" id="UPA00138"/>
<dbReference type="GO" id="GO:0005829">
    <property type="term" value="C:cytosol"/>
    <property type="evidence" value="ECO:0007669"/>
    <property type="project" value="TreeGrafter"/>
</dbReference>
<dbReference type="GO" id="GO:0097367">
    <property type="term" value="F:carbohydrate derivative binding"/>
    <property type="evidence" value="ECO:0007669"/>
    <property type="project" value="InterPro"/>
</dbReference>
<dbReference type="GO" id="GO:0004347">
    <property type="term" value="F:glucose-6-phosphate isomerase activity"/>
    <property type="evidence" value="ECO:0007669"/>
    <property type="project" value="UniProtKB-UniRule"/>
</dbReference>
<dbReference type="GO" id="GO:0048029">
    <property type="term" value="F:monosaccharide binding"/>
    <property type="evidence" value="ECO:0007669"/>
    <property type="project" value="TreeGrafter"/>
</dbReference>
<dbReference type="GO" id="GO:0006094">
    <property type="term" value="P:gluconeogenesis"/>
    <property type="evidence" value="ECO:0007669"/>
    <property type="project" value="UniProtKB-UniRule"/>
</dbReference>
<dbReference type="GO" id="GO:0051156">
    <property type="term" value="P:glucose 6-phosphate metabolic process"/>
    <property type="evidence" value="ECO:0007669"/>
    <property type="project" value="TreeGrafter"/>
</dbReference>
<dbReference type="GO" id="GO:0006096">
    <property type="term" value="P:glycolytic process"/>
    <property type="evidence" value="ECO:0007669"/>
    <property type="project" value="UniProtKB-UniRule"/>
</dbReference>
<dbReference type="CDD" id="cd05015">
    <property type="entry name" value="SIS_PGI_1"/>
    <property type="match status" value="1"/>
</dbReference>
<dbReference type="CDD" id="cd05016">
    <property type="entry name" value="SIS_PGI_2"/>
    <property type="match status" value="1"/>
</dbReference>
<dbReference type="Gene3D" id="1.10.1390.10">
    <property type="match status" value="1"/>
</dbReference>
<dbReference type="Gene3D" id="3.40.50.10490">
    <property type="entry name" value="Glucose-6-phosphate isomerase like protein, domain 1"/>
    <property type="match status" value="2"/>
</dbReference>
<dbReference type="HAMAP" id="MF_00473">
    <property type="entry name" value="G6P_isomerase"/>
    <property type="match status" value="1"/>
</dbReference>
<dbReference type="InterPro" id="IPR001672">
    <property type="entry name" value="G6P_Isomerase"/>
</dbReference>
<dbReference type="InterPro" id="IPR023096">
    <property type="entry name" value="G6P_Isomerase_C"/>
</dbReference>
<dbReference type="InterPro" id="IPR018189">
    <property type="entry name" value="Phosphoglucose_isomerase_CS"/>
</dbReference>
<dbReference type="InterPro" id="IPR046348">
    <property type="entry name" value="SIS_dom_sf"/>
</dbReference>
<dbReference type="InterPro" id="IPR035476">
    <property type="entry name" value="SIS_PGI_1"/>
</dbReference>
<dbReference type="InterPro" id="IPR035482">
    <property type="entry name" value="SIS_PGI_2"/>
</dbReference>
<dbReference type="NCBIfam" id="NF001211">
    <property type="entry name" value="PRK00179.1"/>
    <property type="match status" value="1"/>
</dbReference>
<dbReference type="PANTHER" id="PTHR11469">
    <property type="entry name" value="GLUCOSE-6-PHOSPHATE ISOMERASE"/>
    <property type="match status" value="1"/>
</dbReference>
<dbReference type="PANTHER" id="PTHR11469:SF1">
    <property type="entry name" value="GLUCOSE-6-PHOSPHATE ISOMERASE"/>
    <property type="match status" value="1"/>
</dbReference>
<dbReference type="Pfam" id="PF00342">
    <property type="entry name" value="PGI"/>
    <property type="match status" value="1"/>
</dbReference>
<dbReference type="PRINTS" id="PR00662">
    <property type="entry name" value="G6PISOMERASE"/>
</dbReference>
<dbReference type="SUPFAM" id="SSF53697">
    <property type="entry name" value="SIS domain"/>
    <property type="match status" value="1"/>
</dbReference>
<dbReference type="PROSITE" id="PS00765">
    <property type="entry name" value="P_GLUCOSE_ISOMERASE_1"/>
    <property type="match status" value="1"/>
</dbReference>
<dbReference type="PROSITE" id="PS00174">
    <property type="entry name" value="P_GLUCOSE_ISOMERASE_2"/>
    <property type="match status" value="1"/>
</dbReference>
<dbReference type="PROSITE" id="PS51463">
    <property type="entry name" value="P_GLUCOSE_ISOMERASE_3"/>
    <property type="match status" value="1"/>
</dbReference>
<reference key="1">
    <citation type="journal article" date="2009" name="BMC Genomics">
        <title>Metabolic analysis of the soil microbe Dechloromonas aromatica str. RCB: indications of a surprisingly complex life-style and cryptic anaerobic pathways for aromatic degradation.</title>
        <authorList>
            <person name="Salinero K.K."/>
            <person name="Keller K."/>
            <person name="Feil W.S."/>
            <person name="Feil H."/>
            <person name="Trong S."/>
            <person name="Di Bartolo G."/>
            <person name="Lapidus A."/>
        </authorList>
    </citation>
    <scope>NUCLEOTIDE SEQUENCE [LARGE SCALE GENOMIC DNA]</scope>
    <source>
        <strain>RCB</strain>
    </source>
</reference>
<keyword id="KW-0963">Cytoplasm</keyword>
<keyword id="KW-0312">Gluconeogenesis</keyword>
<keyword id="KW-0324">Glycolysis</keyword>
<keyword id="KW-0413">Isomerase</keyword>
<organism>
    <name type="scientific">Dechloromonas aromatica (strain RCB)</name>
    <dbReference type="NCBI Taxonomy" id="159087"/>
    <lineage>
        <taxon>Bacteria</taxon>
        <taxon>Pseudomonadati</taxon>
        <taxon>Pseudomonadota</taxon>
        <taxon>Betaproteobacteria</taxon>
        <taxon>Rhodocyclales</taxon>
        <taxon>Azonexaceae</taxon>
        <taxon>Dechloromonas</taxon>
    </lineage>
</organism>
<protein>
    <recommendedName>
        <fullName evidence="1">Glucose-6-phosphate isomerase</fullName>
        <shortName evidence="1">GPI</shortName>
        <ecNumber evidence="1">5.3.1.9</ecNumber>
    </recommendedName>
    <alternativeName>
        <fullName evidence="1">Phosphoglucose isomerase</fullName>
        <shortName evidence="1">PGI</shortName>
    </alternativeName>
    <alternativeName>
        <fullName evidence="1">Phosphohexose isomerase</fullName>
        <shortName evidence="1">PHI</shortName>
    </alternativeName>
</protein>
<evidence type="ECO:0000255" key="1">
    <source>
        <dbReference type="HAMAP-Rule" id="MF_00473"/>
    </source>
</evidence>